<evidence type="ECO:0000250" key="1"/>
<evidence type="ECO:0000255" key="2"/>
<evidence type="ECO:0000255" key="3">
    <source>
        <dbReference type="PROSITE-ProRule" id="PRU00076"/>
    </source>
</evidence>
<evidence type="ECO:0000269" key="4">
    <source>
    </source>
</evidence>
<evidence type="ECO:0000305" key="5"/>
<protein>
    <recommendedName>
        <fullName>Cryptic protein</fullName>
    </recommendedName>
    <alternativeName>
        <fullName>Cripto-related factor 1</fullName>
    </alternativeName>
</protein>
<sequence length="193" mass="22332">MFWRKHVRILFTVTLIWQAIHLGKGREKEHEKDVKNFNDTAQKQSPKNSVTIIDAFSDMNQSYQSRKQQNSREFVPFTGITESKNLNRNCCQNGGTCILGAFCACPKHFSGRHCELRKCGSIIHGDWVMKGCWLCRCLYGTLKCLSQNTQDGCELRREEEIIRLYSNGLRLQQTMSALICLLTFLLELCCWQL</sequence>
<keyword id="KW-1003">Cell membrane</keyword>
<keyword id="KW-0217">Developmental protein</keyword>
<keyword id="KW-1015">Disulfide bond</keyword>
<keyword id="KW-0245">EGF-like domain</keyword>
<keyword id="KW-0306">Gastrulation</keyword>
<keyword id="KW-0325">Glycoprotein</keyword>
<keyword id="KW-0336">GPI-anchor</keyword>
<keyword id="KW-0449">Lipoprotein</keyword>
<keyword id="KW-0472">Membrane</keyword>
<keyword id="KW-1185">Reference proteome</keyword>
<keyword id="KW-0964">Secreted</keyword>
<keyword id="KW-0732">Signal</keyword>
<name>CFC1_CHICK</name>
<organism>
    <name type="scientific">Gallus gallus</name>
    <name type="common">Chicken</name>
    <dbReference type="NCBI Taxonomy" id="9031"/>
    <lineage>
        <taxon>Eukaryota</taxon>
        <taxon>Metazoa</taxon>
        <taxon>Chordata</taxon>
        <taxon>Craniata</taxon>
        <taxon>Vertebrata</taxon>
        <taxon>Euteleostomi</taxon>
        <taxon>Archelosauria</taxon>
        <taxon>Archosauria</taxon>
        <taxon>Dinosauria</taxon>
        <taxon>Saurischia</taxon>
        <taxon>Theropoda</taxon>
        <taxon>Coelurosauria</taxon>
        <taxon>Aves</taxon>
        <taxon>Neognathae</taxon>
        <taxon>Galloanserae</taxon>
        <taxon>Galliformes</taxon>
        <taxon>Phasianidae</taxon>
        <taxon>Phasianinae</taxon>
        <taxon>Gallus</taxon>
    </lineage>
</organism>
<gene>
    <name type="primary">CFC1</name>
</gene>
<dbReference type="EMBL" id="AF228760">
    <property type="protein sequence ID" value="AAF97868.1"/>
    <property type="molecule type" value="mRNA"/>
</dbReference>
<dbReference type="EMBL" id="AF228762">
    <property type="protein sequence ID" value="AAF97869.1"/>
    <property type="molecule type" value="Genomic_DNA"/>
</dbReference>
<dbReference type="EMBL" id="AF228761">
    <property type="protein sequence ID" value="AAF97869.1"/>
    <property type="status" value="JOINED"/>
    <property type="molecule type" value="Genomic_DNA"/>
</dbReference>
<dbReference type="EMBL" id="AF282984">
    <property type="protein sequence ID" value="AAK07089.1"/>
    <property type="molecule type" value="mRNA"/>
</dbReference>
<dbReference type="RefSeq" id="NP_990031.1">
    <property type="nucleotide sequence ID" value="NM_204700.3"/>
</dbReference>
<dbReference type="SMR" id="Q9I8Q3"/>
<dbReference type="FunCoup" id="Q9I8Q3">
    <property type="interactions" value="1"/>
</dbReference>
<dbReference type="STRING" id="9031.ENSGALP00000020578"/>
<dbReference type="GlyCosmos" id="Q9I8Q3">
    <property type="glycosylation" value="2 sites, No reported glycans"/>
</dbReference>
<dbReference type="GlyGen" id="Q9I8Q3">
    <property type="glycosylation" value="2 sites"/>
</dbReference>
<dbReference type="PaxDb" id="9031-ENSGALP00000020578"/>
<dbReference type="Ensembl" id="ENSGALT00010021197.1">
    <property type="protein sequence ID" value="ENSGALP00010012120.1"/>
    <property type="gene ID" value="ENSGALG00010008928.1"/>
</dbReference>
<dbReference type="GeneID" id="395437"/>
<dbReference type="KEGG" id="gga:395437"/>
<dbReference type="CTD" id="55997"/>
<dbReference type="VEuPathDB" id="HostDB:geneid_395437"/>
<dbReference type="eggNOG" id="KOG1217">
    <property type="taxonomic scope" value="Eukaryota"/>
</dbReference>
<dbReference type="GeneTree" id="ENSGT00940000162302"/>
<dbReference type="HOGENOM" id="CLU_092661_0_0_1"/>
<dbReference type="InParanoid" id="Q9I8Q3"/>
<dbReference type="OMA" id="PGSCDPK"/>
<dbReference type="OrthoDB" id="9893603at2759"/>
<dbReference type="PhylomeDB" id="Q9I8Q3"/>
<dbReference type="TreeFam" id="TF333187"/>
<dbReference type="PRO" id="PR:Q9I8Q3"/>
<dbReference type="Proteomes" id="UP000000539">
    <property type="component" value="Chromosome Z"/>
</dbReference>
<dbReference type="Bgee" id="ENSGALG00000012623">
    <property type="expression patterns" value="Expressed in spermatocyte and 7 other cell types or tissues"/>
</dbReference>
<dbReference type="GO" id="GO:0009986">
    <property type="term" value="C:cell surface"/>
    <property type="evidence" value="ECO:0000318"/>
    <property type="project" value="GO_Central"/>
</dbReference>
<dbReference type="GO" id="GO:0005576">
    <property type="term" value="C:extracellular region"/>
    <property type="evidence" value="ECO:0000318"/>
    <property type="project" value="GO_Central"/>
</dbReference>
<dbReference type="GO" id="GO:0005886">
    <property type="term" value="C:plasma membrane"/>
    <property type="evidence" value="ECO:0007669"/>
    <property type="project" value="UniProtKB-SubCell"/>
</dbReference>
<dbReference type="GO" id="GO:0098552">
    <property type="term" value="C:side of membrane"/>
    <property type="evidence" value="ECO:0007669"/>
    <property type="project" value="UniProtKB-KW"/>
</dbReference>
<dbReference type="GO" id="GO:0070697">
    <property type="term" value="F:activin receptor binding"/>
    <property type="evidence" value="ECO:0000318"/>
    <property type="project" value="GO_Central"/>
</dbReference>
<dbReference type="GO" id="GO:0038100">
    <property type="term" value="F:nodal binding"/>
    <property type="evidence" value="ECO:0000318"/>
    <property type="project" value="GO_Central"/>
</dbReference>
<dbReference type="GO" id="GO:0009952">
    <property type="term" value="P:anterior/posterior pattern specification"/>
    <property type="evidence" value="ECO:0000318"/>
    <property type="project" value="GO_Central"/>
</dbReference>
<dbReference type="GO" id="GO:0001568">
    <property type="term" value="P:blood vessel development"/>
    <property type="evidence" value="ECO:0000318"/>
    <property type="project" value="GO_Central"/>
</dbReference>
<dbReference type="GO" id="GO:0007368">
    <property type="term" value="P:determination of left/right symmetry"/>
    <property type="evidence" value="ECO:0000318"/>
    <property type="project" value="GO_Central"/>
</dbReference>
<dbReference type="GO" id="GO:0007369">
    <property type="term" value="P:gastrulation"/>
    <property type="evidence" value="ECO:0007669"/>
    <property type="project" value="UniProtKB-KW"/>
</dbReference>
<dbReference type="GO" id="GO:0007507">
    <property type="term" value="P:heart development"/>
    <property type="evidence" value="ECO:0000318"/>
    <property type="project" value="GO_Central"/>
</dbReference>
<dbReference type="GO" id="GO:0038092">
    <property type="term" value="P:nodal signaling pathway"/>
    <property type="evidence" value="ECO:0000318"/>
    <property type="project" value="GO_Central"/>
</dbReference>
<dbReference type="CDD" id="cd00054">
    <property type="entry name" value="EGF_CA"/>
    <property type="match status" value="1"/>
</dbReference>
<dbReference type="FunFam" id="2.10.25.10:FF:000421">
    <property type="entry name" value="Teratocarcinoma-derived growth factor"/>
    <property type="match status" value="1"/>
</dbReference>
<dbReference type="Gene3D" id="2.10.25.10">
    <property type="entry name" value="Laminin"/>
    <property type="match status" value="1"/>
</dbReference>
<dbReference type="InterPro" id="IPR019011">
    <property type="entry name" value="Cryptic/Cripto_CFC-dom"/>
</dbReference>
<dbReference type="InterPro" id="IPR000742">
    <property type="entry name" value="EGF-like_dom"/>
</dbReference>
<dbReference type="Pfam" id="PF09443">
    <property type="entry name" value="CFC"/>
    <property type="match status" value="1"/>
</dbReference>
<dbReference type="SUPFAM" id="SSF57196">
    <property type="entry name" value="EGF/Laminin"/>
    <property type="match status" value="2"/>
</dbReference>
<dbReference type="PROSITE" id="PS00022">
    <property type="entry name" value="EGF_1"/>
    <property type="match status" value="1"/>
</dbReference>
<dbReference type="PROSITE" id="PS50026">
    <property type="entry name" value="EGF_3"/>
    <property type="match status" value="1"/>
</dbReference>
<feature type="signal peptide" evidence="2">
    <location>
        <begin position="1"/>
        <end position="25"/>
    </location>
</feature>
<feature type="chain" id="PRO_0000044632" description="Cryptic protein">
    <location>
        <begin position="26"/>
        <end position="193"/>
    </location>
</feature>
<feature type="domain" description="EGF-like" evidence="3">
    <location>
        <begin position="91"/>
        <end position="115"/>
    </location>
</feature>
<feature type="glycosylation site" description="N-linked (GlcNAc...) asparagine" evidence="2">
    <location>
        <position position="38"/>
    </location>
</feature>
<feature type="glycosylation site" description="N-linked (GlcNAc...) asparagine" evidence="2">
    <location>
        <position position="60"/>
    </location>
</feature>
<feature type="disulfide bond" evidence="3">
    <location>
        <begin position="91"/>
        <end position="103"/>
    </location>
</feature>
<feature type="disulfide bond" evidence="3">
    <location>
        <begin position="105"/>
        <end position="114"/>
    </location>
</feature>
<accession>Q9I8Q3</accession>
<comment type="function">
    <text evidence="4">May play a role in mesoderm and/or neural patterning during gastrulation.</text>
</comment>
<comment type="subcellular location">
    <subcellularLocation>
        <location evidence="1">Cell membrane</location>
        <topology evidence="1">Lipid-anchor</topology>
        <topology evidence="1">GPI-anchor</topology>
    </subcellularLocation>
    <subcellularLocation>
        <location evidence="1">Secreted</location>
    </subcellularLocation>
</comment>
<comment type="developmental stage">
    <text evidence="4">First detected in the early streak embryo, specifically in the epiblast layer. At the late streak stage, expression is condensed in the rostral half of the primitive streak. At HH stage 4 expression appeared for the first time in the mesendodermal layer of the presumptive prechordal plate rostrally and in the expanding mesoderm laterally. At HH stage 6, labeling in mesendodermal progenitors underlying the future forebrain level of the neuraxis reached its maximum, whereas mesoderm expression, which was restricted to the lateral plate, was accompanied by an underlying endodermal expression at the level of the heart-forming regions. Later gastrulation (HH stage 5-7) was marked by strong expression in the notochord, beneath the future floor plate of the neural tube. Expressed in Hensen node, within its mesenchymal core beneath the epiblast, and at a time when it is morphologically asymmetric.</text>
</comment>
<comment type="similarity">
    <text evidence="5">Belongs to the EGF-CFC (Cripto-1/FRL1/Cryptic) family.</text>
</comment>
<reference key="1">
    <citation type="journal article" date="2000" name="Gene">
        <title>Subtractive hybridization identifies chick-cripto, a novel EGF-CFC ortholog expressed during gastrulation, neurulation and early cardiogenesis.</title>
        <authorList>
            <person name="Colas J.-F."/>
            <person name="Schoenwolf G.C."/>
        </authorList>
    </citation>
    <scope>NUCLEOTIDE SEQUENCE [GENOMIC DNA / MRNA]</scope>
    <scope>FUNCTION</scope>
    <scope>DEVELOPMENTAL STAGE</scope>
</reference>
<reference key="2">
    <citation type="submission" date="2000-06" db="EMBL/GenBank/DDBJ databases">
        <title>Dual function of chicken cryptic in the determination of left-right asymmetry: control of midline barrier formation and lateralization of the lateral plate mesoderm.</title>
        <authorList>
            <person name="Schlange T."/>
            <person name="Schnipkoweit I."/>
            <person name="Andree B."/>
            <person name="Ebert A."/>
            <person name="Zile M.H."/>
            <person name="Arnold H.-H."/>
            <person name="Brand T."/>
        </authorList>
    </citation>
    <scope>NUCLEOTIDE SEQUENCE [MRNA]</scope>
</reference>
<proteinExistence type="evidence at transcript level"/>